<evidence type="ECO:0000255" key="1"/>
<evidence type="ECO:0000305" key="2"/>
<accession>O31485</accession>
<comment type="subcellular location">
    <subcellularLocation>
        <location evidence="2">Cell membrane</location>
        <topology evidence="2">Multi-pass membrane protein</topology>
    </subcellularLocation>
</comment>
<dbReference type="EMBL" id="AL009126">
    <property type="protein sequence ID" value="CAB12231.1"/>
    <property type="molecule type" value="Genomic_DNA"/>
</dbReference>
<dbReference type="PIR" id="E69790">
    <property type="entry name" value="E69790"/>
</dbReference>
<dbReference type="RefSeq" id="NP_388305.1">
    <property type="nucleotide sequence ID" value="NC_000964.3"/>
</dbReference>
<dbReference type="RefSeq" id="WP_003246602.1">
    <property type="nucleotide sequence ID" value="NZ_OZ025638.1"/>
</dbReference>
<dbReference type="FunCoup" id="O31485">
    <property type="interactions" value="10"/>
</dbReference>
<dbReference type="STRING" id="224308.BSU04240"/>
<dbReference type="PaxDb" id="224308-BSU04240"/>
<dbReference type="EnsemblBacteria" id="CAB12231">
    <property type="protein sequence ID" value="CAB12231"/>
    <property type="gene ID" value="BSU_04240"/>
</dbReference>
<dbReference type="GeneID" id="938248"/>
<dbReference type="KEGG" id="bsu:BSU04240"/>
<dbReference type="PATRIC" id="fig|224308.179.peg.450"/>
<dbReference type="eggNOG" id="COG2814">
    <property type="taxonomic scope" value="Bacteria"/>
</dbReference>
<dbReference type="InParanoid" id="O31485"/>
<dbReference type="OrthoDB" id="1121311at2"/>
<dbReference type="PhylomeDB" id="O31485"/>
<dbReference type="BioCyc" id="BSUB:BSU04240-MONOMER"/>
<dbReference type="Proteomes" id="UP000001570">
    <property type="component" value="Chromosome"/>
</dbReference>
<dbReference type="GO" id="GO:0005886">
    <property type="term" value="C:plasma membrane"/>
    <property type="evidence" value="ECO:0007669"/>
    <property type="project" value="UniProtKB-SubCell"/>
</dbReference>
<dbReference type="InterPro" id="IPR023845">
    <property type="entry name" value="DUF3817_TM"/>
</dbReference>
<dbReference type="NCBIfam" id="TIGR03954">
    <property type="entry name" value="integ_memb_HG"/>
    <property type="match status" value="1"/>
</dbReference>
<dbReference type="PANTHER" id="PTHR40077:SF1">
    <property type="entry name" value="MEMBRANE PROTEIN"/>
    <property type="match status" value="1"/>
</dbReference>
<dbReference type="PANTHER" id="PTHR40077">
    <property type="entry name" value="MEMBRANE PROTEIN-RELATED"/>
    <property type="match status" value="1"/>
</dbReference>
<dbReference type="Pfam" id="PF12823">
    <property type="entry name" value="DUF3817"/>
    <property type="match status" value="1"/>
</dbReference>
<keyword id="KW-1003">Cell membrane</keyword>
<keyword id="KW-0472">Membrane</keyword>
<keyword id="KW-1185">Reference proteome</keyword>
<keyword id="KW-0812">Transmembrane</keyword>
<keyword id="KW-1133">Transmembrane helix</keyword>
<organism>
    <name type="scientific">Bacillus subtilis (strain 168)</name>
    <dbReference type="NCBI Taxonomy" id="224308"/>
    <lineage>
        <taxon>Bacteria</taxon>
        <taxon>Bacillati</taxon>
        <taxon>Bacillota</taxon>
        <taxon>Bacilli</taxon>
        <taxon>Bacillales</taxon>
        <taxon>Bacillaceae</taxon>
        <taxon>Bacillus</taxon>
    </lineage>
</organism>
<protein>
    <recommendedName>
        <fullName>Uncharacterized membrane protein YdzA</fullName>
    </recommendedName>
</protein>
<proteinExistence type="predicted"/>
<feature type="chain" id="PRO_0000372588" description="Uncharacterized membrane protein YdzA">
    <location>
        <begin position="1"/>
        <end position="96"/>
    </location>
</feature>
<feature type="transmembrane region" description="Helical" evidence="1">
    <location>
        <begin position="14"/>
        <end position="34"/>
    </location>
</feature>
<feature type="transmembrane region" description="Helical" evidence="1">
    <location>
        <begin position="38"/>
        <end position="58"/>
    </location>
</feature>
<feature type="transmembrane region" description="Helical" evidence="1">
    <location>
        <begin position="67"/>
        <end position="87"/>
    </location>
</feature>
<name>YDZA_BACSU</name>
<gene>
    <name type="primary">ydzA</name>
    <name type="ordered locus">BSU04240</name>
</gene>
<reference key="1">
    <citation type="journal article" date="1997" name="Nature">
        <title>The complete genome sequence of the Gram-positive bacterium Bacillus subtilis.</title>
        <authorList>
            <person name="Kunst F."/>
            <person name="Ogasawara N."/>
            <person name="Moszer I."/>
            <person name="Albertini A.M."/>
            <person name="Alloni G."/>
            <person name="Azevedo V."/>
            <person name="Bertero M.G."/>
            <person name="Bessieres P."/>
            <person name="Bolotin A."/>
            <person name="Borchert S."/>
            <person name="Borriss R."/>
            <person name="Boursier L."/>
            <person name="Brans A."/>
            <person name="Braun M."/>
            <person name="Brignell S.C."/>
            <person name="Bron S."/>
            <person name="Brouillet S."/>
            <person name="Bruschi C.V."/>
            <person name="Caldwell B."/>
            <person name="Capuano V."/>
            <person name="Carter N.M."/>
            <person name="Choi S.-K."/>
            <person name="Codani J.-J."/>
            <person name="Connerton I.F."/>
            <person name="Cummings N.J."/>
            <person name="Daniel R.A."/>
            <person name="Denizot F."/>
            <person name="Devine K.M."/>
            <person name="Duesterhoeft A."/>
            <person name="Ehrlich S.D."/>
            <person name="Emmerson P.T."/>
            <person name="Entian K.-D."/>
            <person name="Errington J."/>
            <person name="Fabret C."/>
            <person name="Ferrari E."/>
            <person name="Foulger D."/>
            <person name="Fritz C."/>
            <person name="Fujita M."/>
            <person name="Fujita Y."/>
            <person name="Fuma S."/>
            <person name="Galizzi A."/>
            <person name="Galleron N."/>
            <person name="Ghim S.-Y."/>
            <person name="Glaser P."/>
            <person name="Goffeau A."/>
            <person name="Golightly E.J."/>
            <person name="Grandi G."/>
            <person name="Guiseppi G."/>
            <person name="Guy B.J."/>
            <person name="Haga K."/>
            <person name="Haiech J."/>
            <person name="Harwood C.R."/>
            <person name="Henaut A."/>
            <person name="Hilbert H."/>
            <person name="Holsappel S."/>
            <person name="Hosono S."/>
            <person name="Hullo M.-F."/>
            <person name="Itaya M."/>
            <person name="Jones L.-M."/>
            <person name="Joris B."/>
            <person name="Karamata D."/>
            <person name="Kasahara Y."/>
            <person name="Klaerr-Blanchard M."/>
            <person name="Klein C."/>
            <person name="Kobayashi Y."/>
            <person name="Koetter P."/>
            <person name="Koningstein G."/>
            <person name="Krogh S."/>
            <person name="Kumano M."/>
            <person name="Kurita K."/>
            <person name="Lapidus A."/>
            <person name="Lardinois S."/>
            <person name="Lauber J."/>
            <person name="Lazarevic V."/>
            <person name="Lee S.-M."/>
            <person name="Levine A."/>
            <person name="Liu H."/>
            <person name="Masuda S."/>
            <person name="Mauel C."/>
            <person name="Medigue C."/>
            <person name="Medina N."/>
            <person name="Mellado R.P."/>
            <person name="Mizuno M."/>
            <person name="Moestl D."/>
            <person name="Nakai S."/>
            <person name="Noback M."/>
            <person name="Noone D."/>
            <person name="O'Reilly M."/>
            <person name="Ogawa K."/>
            <person name="Ogiwara A."/>
            <person name="Oudega B."/>
            <person name="Park S.-H."/>
            <person name="Parro V."/>
            <person name="Pohl T.M."/>
            <person name="Portetelle D."/>
            <person name="Porwollik S."/>
            <person name="Prescott A.M."/>
            <person name="Presecan E."/>
            <person name="Pujic P."/>
            <person name="Purnelle B."/>
            <person name="Rapoport G."/>
            <person name="Rey M."/>
            <person name="Reynolds S."/>
            <person name="Rieger M."/>
            <person name="Rivolta C."/>
            <person name="Rocha E."/>
            <person name="Roche B."/>
            <person name="Rose M."/>
            <person name="Sadaie Y."/>
            <person name="Sato T."/>
            <person name="Scanlan E."/>
            <person name="Schleich S."/>
            <person name="Schroeter R."/>
            <person name="Scoffone F."/>
            <person name="Sekiguchi J."/>
            <person name="Sekowska A."/>
            <person name="Seror S.J."/>
            <person name="Serror P."/>
            <person name="Shin B.-S."/>
            <person name="Soldo B."/>
            <person name="Sorokin A."/>
            <person name="Tacconi E."/>
            <person name="Takagi T."/>
            <person name="Takahashi H."/>
            <person name="Takemaru K."/>
            <person name="Takeuchi M."/>
            <person name="Tamakoshi A."/>
            <person name="Tanaka T."/>
            <person name="Terpstra P."/>
            <person name="Tognoni A."/>
            <person name="Tosato V."/>
            <person name="Uchiyama S."/>
            <person name="Vandenbol M."/>
            <person name="Vannier F."/>
            <person name="Vassarotti A."/>
            <person name="Viari A."/>
            <person name="Wambutt R."/>
            <person name="Wedler E."/>
            <person name="Wedler H."/>
            <person name="Weitzenegger T."/>
            <person name="Winters P."/>
            <person name="Wipat A."/>
            <person name="Yamamoto H."/>
            <person name="Yamane K."/>
            <person name="Yasumoto K."/>
            <person name="Yata K."/>
            <person name="Yoshida K."/>
            <person name="Yoshikawa H.-F."/>
            <person name="Zumstein E."/>
            <person name="Yoshikawa H."/>
            <person name="Danchin A."/>
        </authorList>
    </citation>
    <scope>NUCLEOTIDE SEQUENCE [LARGE SCALE GENOMIC DNA]</scope>
    <source>
        <strain>168</strain>
    </source>
</reference>
<sequence length="96" mass="10738">MLHTPIGRLRTMGFIEGMSLLILLFIAMPLKYWAGLPLAVTIVGSVHGGLFILYLLVLAYATFSVKWPLKWSAAGFIAAFVPFGNFLYDRGLRNYK</sequence>